<accession>P55730</accession>
<geneLocation type="plasmid">
    <name>sym pNGR234a</name>
</geneLocation>
<dbReference type="EC" id="3.4.22.-"/>
<dbReference type="EMBL" id="U00090">
    <property type="protein sequence ID" value="AAB91961.1"/>
    <property type="molecule type" value="Genomic_DNA"/>
</dbReference>
<dbReference type="RefSeq" id="NP_444174.1">
    <property type="nucleotide sequence ID" value="NC_000914.2"/>
</dbReference>
<dbReference type="RefSeq" id="WP_010875091.1">
    <property type="nucleotide sequence ID" value="NC_000914.2"/>
</dbReference>
<dbReference type="SMR" id="P55730"/>
<dbReference type="MEROPS" id="C58.004"/>
<dbReference type="KEGG" id="rhi:NGR_a00490"/>
<dbReference type="eggNOG" id="ENOG50334JQ">
    <property type="taxonomic scope" value="Bacteria"/>
</dbReference>
<dbReference type="HOGENOM" id="CLU_089565_0_0_5"/>
<dbReference type="OrthoDB" id="7300477at2"/>
<dbReference type="Proteomes" id="UP000001054">
    <property type="component" value="Plasmid pNGR234a"/>
</dbReference>
<dbReference type="GO" id="GO:0004197">
    <property type="term" value="F:cysteine-type endopeptidase activity"/>
    <property type="evidence" value="ECO:0007669"/>
    <property type="project" value="InterPro"/>
</dbReference>
<dbReference type="GO" id="GO:0006508">
    <property type="term" value="P:proteolysis"/>
    <property type="evidence" value="ECO:0007669"/>
    <property type="project" value="UniProtKB-KW"/>
</dbReference>
<dbReference type="CDD" id="cd20497">
    <property type="entry name" value="C58_YopT-like"/>
    <property type="match status" value="1"/>
</dbReference>
<dbReference type="Gene3D" id="3.90.70.20">
    <property type="match status" value="1"/>
</dbReference>
<dbReference type="InterPro" id="IPR038765">
    <property type="entry name" value="Papain-like_cys_pep_sf"/>
</dbReference>
<dbReference type="InterPro" id="IPR006473">
    <property type="entry name" value="Peptidase_C58_Yopt"/>
</dbReference>
<dbReference type="NCBIfam" id="TIGR01586">
    <property type="entry name" value="yopT_cys_prot"/>
    <property type="match status" value="1"/>
</dbReference>
<dbReference type="Pfam" id="PF03543">
    <property type="entry name" value="Peptidase_C58"/>
    <property type="match status" value="1"/>
</dbReference>
<dbReference type="SUPFAM" id="SSF54001">
    <property type="entry name" value="Cysteine proteinases"/>
    <property type="match status" value="1"/>
</dbReference>
<reference key="1">
    <citation type="journal article" date="1997" name="Nature">
        <title>Molecular basis of symbiosis between Rhizobium and legumes.</title>
        <authorList>
            <person name="Freiberg C.A."/>
            <person name="Fellay R."/>
            <person name="Bairoch A."/>
            <person name="Broughton W.J."/>
            <person name="Rosenthal A."/>
            <person name="Perret X."/>
        </authorList>
    </citation>
    <scope>NUCLEOTIDE SEQUENCE [LARGE SCALE GENOMIC DNA]</scope>
    <source>
        <strain>NBRC 101917 / NGR234</strain>
    </source>
</reference>
<reference key="2">
    <citation type="journal article" date="2009" name="Appl. Environ. Microbiol.">
        <title>Rhizobium sp. strain NGR234 possesses a remarkable number of secretion systems.</title>
        <authorList>
            <person name="Schmeisser C."/>
            <person name="Liesegang H."/>
            <person name="Krysciak D."/>
            <person name="Bakkou N."/>
            <person name="Le Quere A."/>
            <person name="Wollherr A."/>
            <person name="Heinemeyer I."/>
            <person name="Morgenstern B."/>
            <person name="Pommerening-Roeser A."/>
            <person name="Flores M."/>
            <person name="Palacios R."/>
            <person name="Brenner S."/>
            <person name="Gottschalk G."/>
            <person name="Schmitz R.A."/>
            <person name="Broughton W.J."/>
            <person name="Perret X."/>
            <person name="Strittmatter A.W."/>
            <person name="Streit W.R."/>
        </authorList>
    </citation>
    <scope>NUCLEOTIDE SEQUENCE [LARGE SCALE GENOMIC DNA]</scope>
    <source>
        <strain>NBRC 101917 / NGR234</strain>
    </source>
</reference>
<proteinExistence type="inferred from homology"/>
<keyword id="KW-0378">Hydrolase</keyword>
<keyword id="KW-0614">Plasmid</keyword>
<keyword id="KW-0645">Protease</keyword>
<keyword id="KW-1185">Reference proteome</keyword>
<keyword id="KW-0788">Thiol protease</keyword>
<gene>
    <name type="ordered locus">NGR_a00490</name>
    <name type="ORF">y4zC</name>
</gene>
<name>Y4ZC_SINFN</name>
<evidence type="ECO:0000250" key="1"/>
<evidence type="ECO:0000256" key="2">
    <source>
        <dbReference type="SAM" id="MobiDB-lite"/>
    </source>
</evidence>
<evidence type="ECO:0000305" key="3"/>
<protein>
    <recommendedName>
        <fullName>Putative cysteine protease YopT-like y4zC</fullName>
        <ecNumber>3.4.22.-</ecNumber>
    </recommendedName>
</protein>
<organism>
    <name type="scientific">Sinorhizobium fredii (strain NBRC 101917 / NGR234)</name>
    <dbReference type="NCBI Taxonomy" id="394"/>
    <lineage>
        <taxon>Bacteria</taxon>
        <taxon>Pseudomonadati</taxon>
        <taxon>Pseudomonadota</taxon>
        <taxon>Alphaproteobacteria</taxon>
        <taxon>Hyphomicrobiales</taxon>
        <taxon>Rhizobiaceae</taxon>
        <taxon>Sinorhizobium/Ensifer group</taxon>
        <taxon>Sinorhizobium</taxon>
    </lineage>
</organism>
<comment type="function">
    <text evidence="1">Potential cysteine protease, which may play a central role after invasion of host cell.</text>
</comment>
<comment type="similarity">
    <text evidence="3">Belongs to the peptidase C58 family.</text>
</comment>
<sequence length="261" mass="28350">MHSPISGSFTSSTQVHDPIHPANSDGFRETLANVELRTKSPSAECPDKMGCCASKPQASDPNNPSTSSPARPSTSLFRYRTAELAQANADGICVGLTAEWLRNLNSHPSIRMEALVPGSQRHASATVRQKEYENLKVHLRRQGAGPSEADFAAQNTMLQKAGLAPSGKEKVYKVGEPNFPRMLTKITADGSNHLLSLYFAEGGAHTVATSAMDGNTTLFDPNFGEFTVQSDQIDDLFRSLANRYSNPNRQHLTTVTTQKMT</sequence>
<feature type="chain" id="PRO_0000192517" description="Putative cysteine protease YopT-like y4zC">
    <location>
        <begin position="1"/>
        <end position="261"/>
    </location>
</feature>
<feature type="region of interest" description="Disordered" evidence="2">
    <location>
        <begin position="1"/>
        <end position="48"/>
    </location>
</feature>
<feature type="region of interest" description="Disordered" evidence="2">
    <location>
        <begin position="54"/>
        <end position="73"/>
    </location>
</feature>
<feature type="compositionally biased region" description="Polar residues" evidence="2">
    <location>
        <begin position="1"/>
        <end position="15"/>
    </location>
</feature>
<feature type="compositionally biased region" description="Low complexity" evidence="2">
    <location>
        <begin position="61"/>
        <end position="73"/>
    </location>
</feature>
<feature type="active site" evidence="1">
    <location>
        <position position="93"/>
    </location>
</feature>
<feature type="active site" evidence="1">
    <location>
        <position position="205"/>
    </location>
</feature>
<feature type="active site" evidence="1">
    <location>
        <position position="220"/>
    </location>
</feature>